<sequence length="126" mass="14540">MKLLILALTCAAAVWARPGETYSDKYDTIDVNEVLQSERLLKGYVECLLDKGRCTPDGKELKDTLPDALEHECSKCTEKQKSGADTVIRHLVNKRPELWKELAVKYDPENIYQERYKDRLESVKEH</sequence>
<organism evidence="5">
    <name type="scientific">Thaumetopoea pityocampa</name>
    <name type="common">Pine processionary moth</name>
    <name type="synonym">Bombyx pityocampa</name>
    <dbReference type="NCBI Taxonomy" id="208016"/>
    <lineage>
        <taxon>Eukaryota</taxon>
        <taxon>Metazoa</taxon>
        <taxon>Ecdysozoa</taxon>
        <taxon>Arthropoda</taxon>
        <taxon>Hexapoda</taxon>
        <taxon>Insecta</taxon>
        <taxon>Pterygota</taxon>
        <taxon>Neoptera</taxon>
        <taxon>Endopterygota</taxon>
        <taxon>Lepidoptera</taxon>
        <taxon>Glossata</taxon>
        <taxon>Ditrysia</taxon>
        <taxon>Noctuoidea</taxon>
        <taxon>Notodontidae</taxon>
        <taxon>Thaumetopoeinae</taxon>
        <taxon>Thaumetopoea</taxon>
    </lineage>
</organism>
<protein>
    <recommendedName>
        <fullName evidence="2">Allergen Tha p 1</fullName>
    </recommendedName>
    <allergenName evidence="2">Tha p 1</allergenName>
</protein>
<proteinExistence type="evidence at protein level"/>
<keyword id="KW-0020">Allergen</keyword>
<keyword id="KW-0903">Direct protein sequencing</keyword>
<keyword id="KW-0964">Secreted</keyword>
<keyword id="KW-0732">Signal</keyword>
<accession>E0X9F6</accession>
<accession>Q7M4K8</accession>
<comment type="subcellular location">
    <subcellularLocation>
        <location evidence="3">Secreted</location>
    </subcellularLocation>
</comment>
<comment type="developmental stage">
    <text evidence="1">Larvae.</text>
</comment>
<comment type="allergen">
    <text evidence="1">Causes an allergic reaction in human. Binds to IgE.</text>
</comment>
<comment type="similarity">
    <text evidence="3">Belongs to the insect A10/OS-D protein family.</text>
</comment>
<name>THAP1_THAPI</name>
<evidence type="ECO:0000269" key="1">
    <source>
    </source>
</evidence>
<evidence type="ECO:0000303" key="2">
    <source>
    </source>
</evidence>
<evidence type="ECO:0000305" key="3"/>
<evidence type="ECO:0000305" key="4">
    <source>
    </source>
</evidence>
<evidence type="ECO:0000312" key="5">
    <source>
        <dbReference type="EMBL" id="ADK47876.1"/>
    </source>
</evidence>
<feature type="signal peptide" evidence="1">
    <location>
        <begin position="1"/>
        <end position="18"/>
    </location>
</feature>
<feature type="chain" id="PRO_5010961907" description="Allergen Tha p 1" evidence="4">
    <location>
        <begin position="19"/>
        <end position="126"/>
    </location>
</feature>
<reference key="1">
    <citation type="submission" date="2012-09" db="EMBL/GenBank/DDBJ databases">
        <authorList>
            <person name="Rodriguez-Mahillo A.I."/>
            <person name="Gonzalez-Munoz M."/>
            <person name="Vega J."/>
            <person name="Battisti A."/>
            <person name="Roques A."/>
            <person name="Moneo I."/>
        </authorList>
    </citation>
    <scope>NUCLEOTIDE SEQUENCE [MRNA]</scope>
</reference>
<reference key="2">
    <citation type="journal article" date="2003" name="Allergy">
        <title>Isolation and characterization of Tha p 1, a major allergen from the pine processionary caterpillar Thaumetopoea pityocampa.</title>
        <authorList>
            <person name="Moneo I."/>
            <person name="Vega J.M."/>
            <person name="Caballero M.L."/>
            <person name="Vega J."/>
            <person name="Alday E."/>
        </authorList>
    </citation>
    <scope>PROTEIN SEQUENCE OF 19-36</scope>
    <scope>ALLERGEN</scope>
    <scope>DEVELOPMENTAL STAGE</scope>
    <source>
        <tissue evidence="2">Larva</tissue>
    </source>
</reference>
<dbReference type="EMBL" id="GQ888732">
    <property type="protein sequence ID" value="ADK47876.1"/>
    <property type="molecule type" value="mRNA"/>
</dbReference>
<dbReference type="EMBL" id="HE962022">
    <property type="protein sequence ID" value="CCJ09295.1"/>
    <property type="molecule type" value="mRNA"/>
</dbReference>
<dbReference type="PIR" id="A59396">
    <property type="entry name" value="A59396"/>
</dbReference>
<dbReference type="SMR" id="E0X9F6"/>
<dbReference type="Allergome" id="3496">
    <property type="allergen name" value="Tha p 1.0101"/>
</dbReference>
<dbReference type="Allergome" id="917">
    <property type="allergen name" value="Tha p 1"/>
</dbReference>
<dbReference type="GO" id="GO:0005576">
    <property type="term" value="C:extracellular region"/>
    <property type="evidence" value="ECO:0007669"/>
    <property type="project" value="UniProtKB-SubCell"/>
</dbReference>
<dbReference type="Gene3D" id="1.10.2080.10">
    <property type="entry name" value="Insect odorant-binding protein A10/Ejaculatory bulb-specific protein 3"/>
    <property type="match status" value="1"/>
</dbReference>
<dbReference type="InterPro" id="IPR005055">
    <property type="entry name" value="A10/PebIII"/>
</dbReference>
<dbReference type="InterPro" id="IPR036682">
    <property type="entry name" value="OS_D_A10/PebIII_sf"/>
</dbReference>
<dbReference type="PANTHER" id="PTHR11257">
    <property type="entry name" value="CHEMOSENSORY PROTEIN-RELATED"/>
    <property type="match status" value="1"/>
</dbReference>
<dbReference type="PANTHER" id="PTHR11257:SF13">
    <property type="entry name" value="GEO07322P1"/>
    <property type="match status" value="1"/>
</dbReference>
<dbReference type="Pfam" id="PF03392">
    <property type="entry name" value="OS-D"/>
    <property type="match status" value="1"/>
</dbReference>
<dbReference type="SUPFAM" id="SSF100910">
    <property type="entry name" value="Chemosensory protein Csp2"/>
    <property type="match status" value="1"/>
</dbReference>